<sequence length="101" mass="11545">MTHNHENDHQHEVITLVDEQGNETLFEILLTIDGREEFGKNYVLLVPAGSEEDESGEIEIQAYSFTENEDGTEGDLQPIPEDSDAEWDMIEEVFNSFLDEN</sequence>
<reference key="1">
    <citation type="journal article" date="2002" name="Proc. Natl. Acad. Sci. U.S.A.">
        <title>Genome sequence and comparative microarray analysis of serotype M18 group A Streptococcus strains associated with acute rheumatic fever outbreaks.</title>
        <authorList>
            <person name="Smoot J.C."/>
            <person name="Barbian K.D."/>
            <person name="Van Gompel J.J."/>
            <person name="Smoot L.M."/>
            <person name="Chaussee M.S."/>
            <person name="Sylva G.L."/>
            <person name="Sturdevant D.E."/>
            <person name="Ricklefs S.M."/>
            <person name="Porcella S.F."/>
            <person name="Parkins L.D."/>
            <person name="Beres S.B."/>
            <person name="Campbell D.S."/>
            <person name="Smith T.M."/>
            <person name="Zhang Q."/>
            <person name="Kapur V."/>
            <person name="Daly J.A."/>
            <person name="Veasy L.G."/>
            <person name="Musser J.M."/>
        </authorList>
    </citation>
    <scope>NUCLEOTIDE SEQUENCE [LARGE SCALE GENOMIC DNA]</scope>
    <source>
        <strain>MGAS8232</strain>
    </source>
</reference>
<feature type="chain" id="PRO_0000304862" description="UPF0473 protein spyM18_2170">
    <location>
        <begin position="1"/>
        <end position="101"/>
    </location>
</feature>
<organism>
    <name type="scientific">Streptococcus pyogenes serotype M18 (strain MGAS8232)</name>
    <dbReference type="NCBI Taxonomy" id="186103"/>
    <lineage>
        <taxon>Bacteria</taxon>
        <taxon>Bacillati</taxon>
        <taxon>Bacillota</taxon>
        <taxon>Bacilli</taxon>
        <taxon>Lactobacillales</taxon>
        <taxon>Streptococcaceae</taxon>
        <taxon>Streptococcus</taxon>
    </lineage>
</organism>
<proteinExistence type="inferred from homology"/>
<protein>
    <recommendedName>
        <fullName evidence="1">UPF0473 protein spyM18_2170</fullName>
    </recommendedName>
</protein>
<accession>Q7CMP0</accession>
<evidence type="ECO:0000255" key="1">
    <source>
        <dbReference type="HAMAP-Rule" id="MF_01448"/>
    </source>
</evidence>
<gene>
    <name type="ordered locus">spyM18_2170</name>
</gene>
<comment type="similarity">
    <text evidence="1">Belongs to the UPF0473 family.</text>
</comment>
<dbReference type="EMBL" id="AE009949">
    <property type="protein sequence ID" value="AAL98614.1"/>
    <property type="molecule type" value="Genomic_DNA"/>
</dbReference>
<dbReference type="RefSeq" id="WP_002982199.1">
    <property type="nucleotide sequence ID" value="NC_003485.1"/>
</dbReference>
<dbReference type="KEGG" id="spm:spyM18_2170"/>
<dbReference type="HOGENOM" id="CLU_146610_2_1_9"/>
<dbReference type="HAMAP" id="MF_01448">
    <property type="entry name" value="UPF0473"/>
    <property type="match status" value="1"/>
</dbReference>
<dbReference type="InterPro" id="IPR009711">
    <property type="entry name" value="UPF0473"/>
</dbReference>
<dbReference type="NCBIfam" id="NF010215">
    <property type="entry name" value="PRK13678.1-2"/>
    <property type="match status" value="1"/>
</dbReference>
<dbReference type="NCBIfam" id="NF010217">
    <property type="entry name" value="PRK13678.1-4"/>
    <property type="match status" value="1"/>
</dbReference>
<dbReference type="PANTHER" id="PTHR40066">
    <property type="entry name" value="UPF0473 PROTEIN CBO2561/CLC_2432"/>
    <property type="match status" value="1"/>
</dbReference>
<dbReference type="PANTHER" id="PTHR40066:SF1">
    <property type="entry name" value="UPF0473 PROTEIN CBO2561_CLC_2432"/>
    <property type="match status" value="1"/>
</dbReference>
<dbReference type="Pfam" id="PF06949">
    <property type="entry name" value="DUF1292"/>
    <property type="match status" value="1"/>
</dbReference>
<name>Y2170_STRP8</name>